<name>WHIA_STRS2</name>
<feature type="chain" id="PRO_0000376595" description="Probable cell division protein WhiA">
    <location>
        <begin position="1"/>
        <end position="305"/>
    </location>
</feature>
<feature type="DNA-binding region" description="H-T-H motif" evidence="1">
    <location>
        <begin position="272"/>
        <end position="305"/>
    </location>
</feature>
<accession>A4W090</accession>
<proteinExistence type="inferred from homology"/>
<dbReference type="EMBL" id="CP000408">
    <property type="protein sequence ID" value="ABP91779.1"/>
    <property type="molecule type" value="Genomic_DNA"/>
</dbReference>
<dbReference type="SMR" id="A4W090"/>
<dbReference type="KEGG" id="ssv:SSU98_0621"/>
<dbReference type="HOGENOM" id="CLU_053282_0_0_9"/>
<dbReference type="GO" id="GO:0003677">
    <property type="term" value="F:DNA binding"/>
    <property type="evidence" value="ECO:0007669"/>
    <property type="project" value="UniProtKB-UniRule"/>
</dbReference>
<dbReference type="GO" id="GO:0051301">
    <property type="term" value="P:cell division"/>
    <property type="evidence" value="ECO:0007669"/>
    <property type="project" value="UniProtKB-UniRule"/>
</dbReference>
<dbReference type="GO" id="GO:0043937">
    <property type="term" value="P:regulation of sporulation"/>
    <property type="evidence" value="ECO:0007669"/>
    <property type="project" value="InterPro"/>
</dbReference>
<dbReference type="Gene3D" id="3.10.28.10">
    <property type="entry name" value="Homing endonucleases"/>
    <property type="match status" value="1"/>
</dbReference>
<dbReference type="HAMAP" id="MF_01420">
    <property type="entry name" value="HTH_type_WhiA"/>
    <property type="match status" value="1"/>
</dbReference>
<dbReference type="InterPro" id="IPR027434">
    <property type="entry name" value="Homing_endonucl"/>
</dbReference>
<dbReference type="InterPro" id="IPR018478">
    <property type="entry name" value="Sporu_reg_WhiA_N_dom"/>
</dbReference>
<dbReference type="InterPro" id="IPR003802">
    <property type="entry name" value="Sporulation_regulator_WhiA"/>
</dbReference>
<dbReference type="InterPro" id="IPR023054">
    <property type="entry name" value="Sporulation_regulator_WhiA_C"/>
</dbReference>
<dbReference type="InterPro" id="IPR039518">
    <property type="entry name" value="WhiA_LAGLIDADG_dom"/>
</dbReference>
<dbReference type="NCBIfam" id="TIGR00647">
    <property type="entry name" value="DNA_bind_WhiA"/>
    <property type="match status" value="1"/>
</dbReference>
<dbReference type="PANTHER" id="PTHR37307">
    <property type="entry name" value="CELL DIVISION PROTEIN WHIA-RELATED"/>
    <property type="match status" value="1"/>
</dbReference>
<dbReference type="PANTHER" id="PTHR37307:SF1">
    <property type="entry name" value="CELL DIVISION PROTEIN WHIA-RELATED"/>
    <property type="match status" value="1"/>
</dbReference>
<dbReference type="Pfam" id="PF02650">
    <property type="entry name" value="HTH_WhiA"/>
    <property type="match status" value="1"/>
</dbReference>
<dbReference type="Pfam" id="PF14527">
    <property type="entry name" value="LAGLIDADG_WhiA"/>
    <property type="match status" value="1"/>
</dbReference>
<dbReference type="Pfam" id="PF10298">
    <property type="entry name" value="WhiA_N"/>
    <property type="match status" value="1"/>
</dbReference>
<dbReference type="SUPFAM" id="SSF55608">
    <property type="entry name" value="Homing endonucleases"/>
    <property type="match status" value="1"/>
</dbReference>
<reference key="1">
    <citation type="journal article" date="2007" name="PLoS ONE">
        <title>A glimpse of streptococcal toxic shock syndrome from comparative genomics of S. suis 2 Chinese isolates.</title>
        <authorList>
            <person name="Chen C."/>
            <person name="Tang J."/>
            <person name="Dong W."/>
            <person name="Wang C."/>
            <person name="Feng Y."/>
            <person name="Wang J."/>
            <person name="Zheng F."/>
            <person name="Pan X."/>
            <person name="Liu D."/>
            <person name="Li M."/>
            <person name="Song Y."/>
            <person name="Zhu X."/>
            <person name="Sun H."/>
            <person name="Feng T."/>
            <person name="Guo Z."/>
            <person name="Ju A."/>
            <person name="Ge J."/>
            <person name="Dong Y."/>
            <person name="Sun W."/>
            <person name="Jiang Y."/>
            <person name="Wang J."/>
            <person name="Yan J."/>
            <person name="Yang H."/>
            <person name="Wang X."/>
            <person name="Gao G.F."/>
            <person name="Yang R."/>
            <person name="Wang J."/>
            <person name="Yu J."/>
        </authorList>
    </citation>
    <scope>NUCLEOTIDE SEQUENCE [LARGE SCALE GENOMIC DNA]</scope>
    <source>
        <strain>98HAH33</strain>
    </source>
</reference>
<organism>
    <name type="scientific">Streptococcus suis (strain 98HAH33)</name>
    <dbReference type="NCBI Taxonomy" id="391296"/>
    <lineage>
        <taxon>Bacteria</taxon>
        <taxon>Bacillati</taxon>
        <taxon>Bacillota</taxon>
        <taxon>Bacilli</taxon>
        <taxon>Lactobacillales</taxon>
        <taxon>Streptococcaceae</taxon>
        <taxon>Streptococcus</taxon>
    </lineage>
</organism>
<protein>
    <recommendedName>
        <fullName evidence="1">Probable cell division protein WhiA</fullName>
    </recommendedName>
</protein>
<evidence type="ECO:0000255" key="1">
    <source>
        <dbReference type="HAMAP-Rule" id="MF_01420"/>
    </source>
</evidence>
<keyword id="KW-0131">Cell cycle</keyword>
<keyword id="KW-0132">Cell division</keyword>
<keyword id="KW-0238">DNA-binding</keyword>
<sequence length="305" mass="34029">MSFTVQVKEELLLQSSQNKSELSAIIKLSGSLGLASSGLTLSISTENAKIARHIYELLLHFYQIKAEIRHHQKPNLKKNRVYAVLIEDGVNEILNDLHLADSFFGLETGISPLVLENDSWSQAYLRGAFLAAGSVKDPEKGKYQLEIASVYSDHANDLANLMQKFLLDAKVIERSKGTITYLQRAEDIMDFLLVIGAEETKTEFENVKLLREARNDLNRATNAEAANIAKTVNASMKTINNIIKIMDTIGLDQLSGDLQEIAQLRIQHPDYSIQQLADSLTVPITKSGVNHRLRKINKIADELTD</sequence>
<comment type="function">
    <text evidence="1">Involved in cell division and chromosome segregation.</text>
</comment>
<comment type="similarity">
    <text evidence="1">Belongs to the WhiA family.</text>
</comment>
<gene>
    <name evidence="1" type="primary">whiA</name>
    <name type="ordered locus">SSU98_0621</name>
</gene>